<organism>
    <name type="scientific">Homo sapiens</name>
    <name type="common">Human</name>
    <dbReference type="NCBI Taxonomy" id="9606"/>
    <lineage>
        <taxon>Eukaryota</taxon>
        <taxon>Metazoa</taxon>
        <taxon>Chordata</taxon>
        <taxon>Craniata</taxon>
        <taxon>Vertebrata</taxon>
        <taxon>Euteleostomi</taxon>
        <taxon>Mammalia</taxon>
        <taxon>Eutheria</taxon>
        <taxon>Euarchontoglires</taxon>
        <taxon>Primates</taxon>
        <taxon>Haplorrhini</taxon>
        <taxon>Catarrhini</taxon>
        <taxon>Hominidae</taxon>
        <taxon>Homo</taxon>
    </lineage>
</organism>
<keyword id="KW-0025">Alternative splicing</keyword>
<keyword id="KW-0112">Calmodulin-binding</keyword>
<keyword id="KW-1003">Cell membrane</keyword>
<keyword id="KW-0966">Cell projection</keyword>
<keyword id="KW-0963">Cytoplasm</keyword>
<keyword id="KW-0217">Developmental protein</keyword>
<keyword id="KW-0221">Differentiation</keyword>
<keyword id="KW-0341">Growth regulation</keyword>
<keyword id="KW-0449">Lipoprotein</keyword>
<keyword id="KW-0472">Membrane</keyword>
<keyword id="KW-0524">Neurogenesis</keyword>
<keyword id="KW-0564">Palmitate</keyword>
<keyword id="KW-0597">Phosphoprotein</keyword>
<keyword id="KW-1267">Proteomics identification</keyword>
<keyword id="KW-1185">Reference proteome</keyword>
<keyword id="KW-0770">Synapse</keyword>
<gene>
    <name type="primary">GAP43</name>
</gene>
<feature type="chain" id="PRO_0000159596" description="Neuromodulin">
    <location>
        <begin position="1"/>
        <end position="238"/>
    </location>
</feature>
<feature type="domain" description="IQ" evidence="4">
    <location>
        <begin position="31"/>
        <end position="60"/>
    </location>
</feature>
<feature type="region of interest" description="Disordered" evidence="5">
    <location>
        <begin position="1"/>
        <end position="238"/>
    </location>
</feature>
<feature type="compositionally biased region" description="Basic and acidic residues" evidence="5">
    <location>
        <begin position="9"/>
        <end position="32"/>
    </location>
</feature>
<feature type="compositionally biased region" description="Basic and acidic residues" evidence="5">
    <location>
        <begin position="54"/>
        <end position="83"/>
    </location>
</feature>
<feature type="compositionally biased region" description="Low complexity" evidence="5">
    <location>
        <begin position="84"/>
        <end position="95"/>
    </location>
</feature>
<feature type="compositionally biased region" description="Basic and acidic residues" evidence="5">
    <location>
        <begin position="97"/>
        <end position="116"/>
    </location>
</feature>
<feature type="compositionally biased region" description="Low complexity" evidence="5">
    <location>
        <begin position="119"/>
        <end position="130"/>
    </location>
</feature>
<feature type="compositionally biased region" description="Polar residues" evidence="5">
    <location>
        <begin position="139"/>
        <end position="154"/>
    </location>
</feature>
<feature type="compositionally biased region" description="Basic and acidic residues" evidence="5">
    <location>
        <begin position="155"/>
        <end position="167"/>
    </location>
</feature>
<feature type="compositionally biased region" description="Low complexity" evidence="5">
    <location>
        <begin position="168"/>
        <end position="199"/>
    </location>
</feature>
<feature type="compositionally biased region" description="Basic and acidic residues" evidence="5">
    <location>
        <begin position="213"/>
        <end position="225"/>
    </location>
</feature>
<feature type="compositionally biased region" description="Acidic residues" evidence="5">
    <location>
        <begin position="226"/>
        <end position="238"/>
    </location>
</feature>
<feature type="modified residue" description="Phosphoserine; by PHK and PKC" evidence="1">
    <location>
        <position position="41"/>
    </location>
</feature>
<feature type="modified residue" description="Phosphoserine" evidence="2">
    <location>
        <position position="151"/>
    </location>
</feature>
<feature type="modified residue" description="Phosphoserine" evidence="2">
    <location>
        <position position="153"/>
    </location>
</feature>
<feature type="modified residue" description="Phosphoserine" evidence="2">
    <location>
        <position position="154"/>
    </location>
</feature>
<feature type="modified residue" description="Phosphothreonine" evidence="2">
    <location>
        <position position="181"/>
    </location>
</feature>
<feature type="modified residue" description="Phosphoserine; by CK2" evidence="1">
    <location>
        <position position="202"/>
    </location>
</feature>
<feature type="modified residue" description="Phosphoserine; by CK2" evidence="1">
    <location>
        <position position="203"/>
    </location>
</feature>
<feature type="lipid moiety-binding region" description="S-palmitoyl cysteine" evidence="1">
    <location>
        <position position="3"/>
    </location>
</feature>
<feature type="lipid moiety-binding region" description="S-palmitoyl cysteine" evidence="1">
    <location>
        <position position="4"/>
    </location>
</feature>
<feature type="splice variant" id="VSP_042783" description="In isoform 2." evidence="9">
    <original>MLCCMRRTKQ</original>
    <variation>MTKSCSELCHPALHFLPCLGGLRKNLQRAVRPSPYSLGFLTFWISR</variation>
    <location>
        <begin position="1"/>
        <end position="10"/>
    </location>
</feature>
<feature type="sequence variant" id="VAR_014172" description="In dbSNP:rs6291." evidence="6">
    <original>V</original>
    <variation>I</variation>
    <location>
        <position position="59"/>
    </location>
</feature>
<feature type="sequence variant" id="VAR_050271" description="In dbSNP:rs11557762.">
    <original>K</original>
    <variation>E</variation>
    <location>
        <position position="162"/>
    </location>
</feature>
<feature type="mutagenesis site" description="Inhibits axonal and dendritic filopodia formation and reduces dendritic and axonal branching." evidence="7">
    <original>CC</original>
    <variation>SS</variation>
    <location>
        <begin position="3"/>
        <end position="4"/>
    </location>
</feature>
<evidence type="ECO:0000250" key="1">
    <source>
        <dbReference type="UniProtKB" id="P06836"/>
    </source>
</evidence>
<evidence type="ECO:0000250" key="2">
    <source>
        <dbReference type="UniProtKB" id="P06837"/>
    </source>
</evidence>
<evidence type="ECO:0000250" key="3">
    <source>
        <dbReference type="UniProtKB" id="P07936"/>
    </source>
</evidence>
<evidence type="ECO:0000255" key="4">
    <source>
        <dbReference type="PROSITE-ProRule" id="PRU00116"/>
    </source>
</evidence>
<evidence type="ECO:0000256" key="5">
    <source>
        <dbReference type="SAM" id="MobiDB-lite"/>
    </source>
</evidence>
<evidence type="ECO:0000269" key="6">
    <source>
    </source>
</evidence>
<evidence type="ECO:0000269" key="7">
    <source>
    </source>
</evidence>
<evidence type="ECO:0000269" key="8">
    <source>
    </source>
</evidence>
<evidence type="ECO:0000303" key="9">
    <source>
    </source>
</evidence>
<evidence type="ECO:0000305" key="10"/>
<dbReference type="EMBL" id="M25667">
    <property type="protein sequence ID" value="AAA52516.1"/>
    <property type="molecule type" value="mRNA"/>
</dbReference>
<dbReference type="EMBL" id="S66541">
    <property type="protein sequence ID" value="AAB28649.1"/>
    <property type="molecule type" value="Genomic_DNA"/>
</dbReference>
<dbReference type="EMBL" id="S66533">
    <property type="protein sequence ID" value="AAB28649.1"/>
    <property type="status" value="JOINED"/>
    <property type="molecule type" value="Genomic_DNA"/>
</dbReference>
<dbReference type="EMBL" id="S66534">
    <property type="protein sequence ID" value="AAB28649.1"/>
    <property type="status" value="JOINED"/>
    <property type="molecule type" value="Genomic_DNA"/>
</dbReference>
<dbReference type="EMBL" id="AY842481">
    <property type="protein sequence ID" value="AAV88094.1"/>
    <property type="molecule type" value="Genomic_DNA"/>
</dbReference>
<dbReference type="EMBL" id="AK289699">
    <property type="protein sequence ID" value="BAF82388.1"/>
    <property type="molecule type" value="mRNA"/>
</dbReference>
<dbReference type="EMBL" id="AK290100">
    <property type="protein sequence ID" value="BAF82789.1"/>
    <property type="molecule type" value="mRNA"/>
</dbReference>
<dbReference type="EMBL" id="AC012598">
    <property type="status" value="NOT_ANNOTATED_CDS"/>
    <property type="molecule type" value="Genomic_DNA"/>
</dbReference>
<dbReference type="EMBL" id="AC092468">
    <property type="status" value="NOT_ANNOTATED_CDS"/>
    <property type="molecule type" value="Genomic_DNA"/>
</dbReference>
<dbReference type="EMBL" id="AC119795">
    <property type="status" value="NOT_ANNOTATED_CDS"/>
    <property type="molecule type" value="Genomic_DNA"/>
</dbReference>
<dbReference type="EMBL" id="BC007936">
    <property type="protein sequence ID" value="AAH07936.1"/>
    <property type="molecule type" value="mRNA"/>
</dbReference>
<dbReference type="CCDS" id="CCDS33830.1">
    <molecule id="P17677-1"/>
</dbReference>
<dbReference type="CCDS" id="CCDS46890.1">
    <molecule id="P17677-2"/>
</dbReference>
<dbReference type="PIR" id="I52638">
    <property type="entry name" value="I52638"/>
</dbReference>
<dbReference type="RefSeq" id="NP_001123536.1">
    <molecule id="P17677-2"/>
    <property type="nucleotide sequence ID" value="NM_001130064.2"/>
</dbReference>
<dbReference type="RefSeq" id="NP_002036.1">
    <molecule id="P17677-1"/>
    <property type="nucleotide sequence ID" value="NM_002045.4"/>
</dbReference>
<dbReference type="RefSeq" id="XP_016861617.1">
    <property type="nucleotide sequence ID" value="XM_017006128.1"/>
</dbReference>
<dbReference type="SMR" id="P17677"/>
<dbReference type="BioGRID" id="108867">
    <property type="interactions" value="35"/>
</dbReference>
<dbReference type="DIP" id="DIP-452N"/>
<dbReference type="FunCoup" id="P17677">
    <property type="interactions" value="343"/>
</dbReference>
<dbReference type="IntAct" id="P17677">
    <property type="interactions" value="32"/>
</dbReference>
<dbReference type="MINT" id="P17677"/>
<dbReference type="STRING" id="9606.ENSP00000377372"/>
<dbReference type="TCDB" id="1.A.71.2.1">
    <property type="family name" value="the brain acid-soluble protein channel (basp1 channel) family"/>
</dbReference>
<dbReference type="GlyCosmos" id="P17677">
    <property type="glycosylation" value="1 site, 1 glycan"/>
</dbReference>
<dbReference type="GlyGen" id="P17677">
    <property type="glycosylation" value="3 sites, 1 O-linked glycan (1 site)"/>
</dbReference>
<dbReference type="iPTMnet" id="P17677"/>
<dbReference type="PhosphoSitePlus" id="P17677"/>
<dbReference type="SwissPalm" id="P17677"/>
<dbReference type="BioMuta" id="GAP43"/>
<dbReference type="jPOST" id="P17677"/>
<dbReference type="MassIVE" id="P17677"/>
<dbReference type="PaxDb" id="9606-ENSP00000377372"/>
<dbReference type="PeptideAtlas" id="P17677"/>
<dbReference type="ProteomicsDB" id="53504">
    <molecule id="P17677-1"/>
</dbReference>
<dbReference type="ProteomicsDB" id="53505">
    <molecule id="P17677-2"/>
</dbReference>
<dbReference type="Pumba" id="P17677"/>
<dbReference type="Antibodypedia" id="2805">
    <property type="antibodies" value="892 antibodies from 42 providers"/>
</dbReference>
<dbReference type="DNASU" id="2596"/>
<dbReference type="Ensembl" id="ENST00000305124.11">
    <molecule id="P17677-1"/>
    <property type="protein sequence ID" value="ENSP00000305010.7"/>
    <property type="gene ID" value="ENSG00000172020.13"/>
</dbReference>
<dbReference type="Ensembl" id="ENST00000393780.3">
    <molecule id="P17677-2"/>
    <property type="protein sequence ID" value="ENSP00000377372.3"/>
    <property type="gene ID" value="ENSG00000172020.13"/>
</dbReference>
<dbReference type="GeneID" id="2596"/>
<dbReference type="KEGG" id="hsa:2596"/>
<dbReference type="MANE-Select" id="ENST00000305124.11">
    <property type="protein sequence ID" value="ENSP00000305010.7"/>
    <property type="RefSeq nucleotide sequence ID" value="NM_002045.4"/>
    <property type="RefSeq protein sequence ID" value="NP_002036.1"/>
</dbReference>
<dbReference type="UCSC" id="uc003ebr.3">
    <molecule id="P17677-1"/>
    <property type="organism name" value="human"/>
</dbReference>
<dbReference type="AGR" id="HGNC:4140"/>
<dbReference type="CTD" id="2596"/>
<dbReference type="DisGeNET" id="2596"/>
<dbReference type="GeneCards" id="GAP43"/>
<dbReference type="HGNC" id="HGNC:4140">
    <property type="gene designation" value="GAP43"/>
</dbReference>
<dbReference type="HPA" id="ENSG00000172020">
    <property type="expression patterns" value="Tissue enriched (brain)"/>
</dbReference>
<dbReference type="MalaCards" id="GAP43"/>
<dbReference type="MIM" id="162060">
    <property type="type" value="gene"/>
</dbReference>
<dbReference type="neXtProt" id="NX_P17677"/>
<dbReference type="OpenTargets" id="ENSG00000172020"/>
<dbReference type="PharmGKB" id="PA28553"/>
<dbReference type="VEuPathDB" id="HostDB:ENSG00000172020"/>
<dbReference type="eggNOG" id="ENOG502RXWF">
    <property type="taxonomic scope" value="Eukaryota"/>
</dbReference>
<dbReference type="GeneTree" id="ENSGT00730000111265"/>
<dbReference type="HOGENOM" id="CLU_102989_0_0_1"/>
<dbReference type="InParanoid" id="P17677"/>
<dbReference type="OMA" id="TNQAKTP"/>
<dbReference type="OrthoDB" id="9397439at2759"/>
<dbReference type="PAN-GO" id="P17677">
    <property type="GO annotations" value="10 GO annotations based on evolutionary models"/>
</dbReference>
<dbReference type="PhylomeDB" id="P17677"/>
<dbReference type="TreeFam" id="TF333213"/>
<dbReference type="PathwayCommons" id="P17677"/>
<dbReference type="Reactome" id="R-HSA-373760">
    <property type="pathway name" value="L1CAM interactions"/>
</dbReference>
<dbReference type="SignaLink" id="P17677"/>
<dbReference type="SIGNOR" id="P17677"/>
<dbReference type="BioGRID-ORCS" id="2596">
    <property type="hits" value="14 hits in 1154 CRISPR screens"/>
</dbReference>
<dbReference type="CD-CODE" id="FB4E32DD">
    <property type="entry name" value="Presynaptic clusters and postsynaptic densities"/>
</dbReference>
<dbReference type="ChiTaRS" id="GAP43">
    <property type="organism name" value="human"/>
</dbReference>
<dbReference type="GeneWiki" id="Gap-43_protein"/>
<dbReference type="GenomeRNAi" id="2596"/>
<dbReference type="Pharos" id="P17677">
    <property type="development level" value="Tbio"/>
</dbReference>
<dbReference type="PRO" id="PR:P17677"/>
<dbReference type="Proteomes" id="UP000005640">
    <property type="component" value="Chromosome 3"/>
</dbReference>
<dbReference type="RNAct" id="P17677">
    <property type="molecule type" value="protein"/>
</dbReference>
<dbReference type="Bgee" id="ENSG00000172020">
    <property type="expression patterns" value="Expressed in Brodmann (1909) area 10 and 154 other cell types or tissues"/>
</dbReference>
<dbReference type="ExpressionAtlas" id="P17677">
    <property type="expression patterns" value="baseline and differential"/>
</dbReference>
<dbReference type="GO" id="GO:0005737">
    <property type="term" value="C:cytoplasm"/>
    <property type="evidence" value="ECO:0000318"/>
    <property type="project" value="GO_Central"/>
</dbReference>
<dbReference type="GO" id="GO:0030425">
    <property type="term" value="C:dendrite"/>
    <property type="evidence" value="ECO:0007669"/>
    <property type="project" value="UniProtKB-SubCell"/>
</dbReference>
<dbReference type="GO" id="GO:0031527">
    <property type="term" value="C:filopodium membrane"/>
    <property type="evidence" value="ECO:0000314"/>
    <property type="project" value="UniProtKB"/>
</dbReference>
<dbReference type="GO" id="GO:0098982">
    <property type="term" value="C:GABA-ergic synapse"/>
    <property type="evidence" value="ECO:0007669"/>
    <property type="project" value="Ensembl"/>
</dbReference>
<dbReference type="GO" id="GO:0032584">
    <property type="term" value="C:growth cone membrane"/>
    <property type="evidence" value="ECO:0007669"/>
    <property type="project" value="UniProtKB-SubCell"/>
</dbReference>
<dbReference type="GO" id="GO:0043204">
    <property type="term" value="C:perikaryon"/>
    <property type="evidence" value="ECO:0007669"/>
    <property type="project" value="UniProtKB-SubCell"/>
</dbReference>
<dbReference type="GO" id="GO:0005886">
    <property type="term" value="C:plasma membrane"/>
    <property type="evidence" value="ECO:0000314"/>
    <property type="project" value="LIFEdb"/>
</dbReference>
<dbReference type="GO" id="GO:0014069">
    <property type="term" value="C:postsynaptic density"/>
    <property type="evidence" value="ECO:0000318"/>
    <property type="project" value="GO_Central"/>
</dbReference>
<dbReference type="GO" id="GO:0098793">
    <property type="term" value="C:presynapse"/>
    <property type="evidence" value="ECO:0007669"/>
    <property type="project" value="Ensembl"/>
</dbReference>
<dbReference type="GO" id="GO:0005516">
    <property type="term" value="F:calmodulin binding"/>
    <property type="evidence" value="ECO:0000318"/>
    <property type="project" value="GO_Central"/>
</dbReference>
<dbReference type="GO" id="GO:0035727">
    <property type="term" value="F:lysophosphatidic acid binding"/>
    <property type="evidence" value="ECO:0000318"/>
    <property type="project" value="GO_Central"/>
</dbReference>
<dbReference type="GO" id="GO:1901981">
    <property type="term" value="F:phosphatidylinositol phosphate binding"/>
    <property type="evidence" value="ECO:0000318"/>
    <property type="project" value="GO_Central"/>
</dbReference>
<dbReference type="GO" id="GO:0001786">
    <property type="term" value="F:phosphatidylserine binding"/>
    <property type="evidence" value="ECO:0000318"/>
    <property type="project" value="GO_Central"/>
</dbReference>
<dbReference type="GO" id="GO:0048708">
    <property type="term" value="P:astrocyte differentiation"/>
    <property type="evidence" value="ECO:0007669"/>
    <property type="project" value="Ensembl"/>
</dbReference>
<dbReference type="GO" id="GO:0016198">
    <property type="term" value="P:axon choice point recognition"/>
    <property type="evidence" value="ECO:0000318"/>
    <property type="project" value="GO_Central"/>
</dbReference>
<dbReference type="GO" id="GO:0031103">
    <property type="term" value="P:axon regeneration"/>
    <property type="evidence" value="ECO:0000318"/>
    <property type="project" value="GO_Central"/>
</dbReference>
<dbReference type="GO" id="GO:0045165">
    <property type="term" value="P:cell fate commitment"/>
    <property type="evidence" value="ECO:0007669"/>
    <property type="project" value="Ensembl"/>
</dbReference>
<dbReference type="GO" id="GO:0007200">
    <property type="term" value="P:phospholipase C-activating G protein-coupled receptor signaling pathway"/>
    <property type="evidence" value="ECO:0000304"/>
    <property type="project" value="ProtInc"/>
</dbReference>
<dbReference type="GO" id="GO:0060019">
    <property type="term" value="P:radial glial cell differentiation"/>
    <property type="evidence" value="ECO:0007669"/>
    <property type="project" value="Ensembl"/>
</dbReference>
<dbReference type="GO" id="GO:0051489">
    <property type="term" value="P:regulation of filopodium assembly"/>
    <property type="evidence" value="ECO:0000314"/>
    <property type="project" value="UniProtKB"/>
</dbReference>
<dbReference type="GO" id="GO:0040008">
    <property type="term" value="P:regulation of growth"/>
    <property type="evidence" value="ECO:0007669"/>
    <property type="project" value="InterPro"/>
</dbReference>
<dbReference type="GO" id="GO:0099150">
    <property type="term" value="P:regulation of postsynaptic specialization assembly"/>
    <property type="evidence" value="ECO:0007669"/>
    <property type="project" value="Ensembl"/>
</dbReference>
<dbReference type="GO" id="GO:0010996">
    <property type="term" value="P:response to auditory stimulus"/>
    <property type="evidence" value="ECO:0007669"/>
    <property type="project" value="Ensembl"/>
</dbReference>
<dbReference type="GO" id="GO:0009611">
    <property type="term" value="P:response to wounding"/>
    <property type="evidence" value="ECO:0000304"/>
    <property type="project" value="ProtInc"/>
</dbReference>
<dbReference type="GO" id="GO:0042246">
    <property type="term" value="P:tissue regeneration"/>
    <property type="evidence" value="ECO:0000318"/>
    <property type="project" value="GO_Central"/>
</dbReference>
<dbReference type="CDD" id="cd23767">
    <property type="entry name" value="IQCD"/>
    <property type="match status" value="1"/>
</dbReference>
<dbReference type="DisProt" id="DP00951"/>
<dbReference type="FunFam" id="1.20.5.190:FF:000044">
    <property type="entry name" value="Neuromodulin isoform 1"/>
    <property type="match status" value="1"/>
</dbReference>
<dbReference type="Gene3D" id="1.20.5.190">
    <property type="match status" value="1"/>
</dbReference>
<dbReference type="InterPro" id="IPR000048">
    <property type="entry name" value="IQ_motif_EF-hand-BS"/>
</dbReference>
<dbReference type="InterPro" id="IPR001422">
    <property type="entry name" value="Neuromodulin"/>
</dbReference>
<dbReference type="InterPro" id="IPR017454">
    <property type="entry name" value="Neuromodulin_C"/>
</dbReference>
<dbReference type="InterPro" id="IPR018947">
    <property type="entry name" value="Neuromodulin_gap-junction_N"/>
</dbReference>
<dbReference type="InterPro" id="IPR033137">
    <property type="entry name" value="Neuromodulin_P_site"/>
</dbReference>
<dbReference type="InterPro" id="IPR018243">
    <property type="entry name" value="Neuromodulin_palmitoyl_site"/>
</dbReference>
<dbReference type="PANTHER" id="PTHR10699">
    <property type="entry name" value="NEUROMODULIN"/>
    <property type="match status" value="1"/>
</dbReference>
<dbReference type="PANTHER" id="PTHR10699:SF15">
    <property type="entry name" value="NEUROMODULIN"/>
    <property type="match status" value="1"/>
</dbReference>
<dbReference type="Pfam" id="PF00612">
    <property type="entry name" value="IQ"/>
    <property type="match status" value="1"/>
</dbReference>
<dbReference type="Pfam" id="PF06614">
    <property type="entry name" value="Neuromodulin"/>
    <property type="match status" value="1"/>
</dbReference>
<dbReference type="Pfam" id="PF10580">
    <property type="entry name" value="Neuromodulin_N"/>
    <property type="match status" value="1"/>
</dbReference>
<dbReference type="PRINTS" id="PR00215">
    <property type="entry name" value="NEUROMODULIN"/>
</dbReference>
<dbReference type="SMART" id="SM00015">
    <property type="entry name" value="IQ"/>
    <property type="match status" value="1"/>
</dbReference>
<dbReference type="PROSITE" id="PS50096">
    <property type="entry name" value="IQ"/>
    <property type="match status" value="1"/>
</dbReference>
<dbReference type="PROSITE" id="PS00412">
    <property type="entry name" value="NEUROMODULIN_1"/>
    <property type="match status" value="1"/>
</dbReference>
<dbReference type="PROSITE" id="PS00413">
    <property type="entry name" value="NEUROMODULIN_2"/>
    <property type="match status" value="1"/>
</dbReference>
<comment type="function">
    <text evidence="7 8">This protein is associated with nerve growth. It is a major component of the motile 'growth cones' that form the tips of elongating axons. Plays a role in axonal and dendritic filopodia induction.</text>
</comment>
<comment type="subunit">
    <text evidence="1 2">Identified in a complex containing FGFR4, NCAM1, CDH2, PLCG1, FRS2, SRC, SHC1, GAP43 and CTTN (By similarity). Interacts (via IQ domain) with calmodulin (By similarity). Binds calmodulin with a greater affinity in the absence of Ca(2+) than in its presence (By similarity).</text>
</comment>
<comment type="interaction">
    <interactant intactId="EBI-1267511">
        <id>P17677</id>
    </interactant>
    <interactant intactId="EBI-302661">
        <id>P05067-8</id>
        <label>APP</label>
    </interactant>
    <organismsDiffer>false</organismsDiffer>
    <experiments>3</experiments>
</comment>
<comment type="interaction">
    <interactant intactId="EBI-1267511">
        <id>P17677</id>
    </interactant>
    <interactant intactId="EBI-8592297">
        <id>P21917</id>
        <label>DRD4</label>
    </interactant>
    <organismsDiffer>false</organismsDiffer>
    <experiments>3</experiments>
</comment>
<comment type="interaction">
    <interactant intactId="EBI-1267511">
        <id>P17677</id>
    </interactant>
    <interactant intactId="EBI-704279">
        <id>Q05655</id>
        <label>PRKCD</label>
    </interactant>
    <organismsDiffer>false</organismsDiffer>
    <experiments>4</experiments>
</comment>
<comment type="subcellular location">
    <subcellularLocation>
        <location evidence="7">Cell membrane</location>
        <topology evidence="7">Peripheral membrane protein</topology>
        <orientation evidence="7">Cytoplasmic side</orientation>
    </subcellularLocation>
    <subcellularLocation>
        <location evidence="7">Cell projection</location>
        <location evidence="7">Growth cone membrane</location>
        <topology evidence="7">Peripheral membrane protein</topology>
        <orientation evidence="7">Cytoplasmic side</orientation>
    </subcellularLocation>
    <subcellularLocation>
        <location evidence="7">Synapse</location>
    </subcellularLocation>
    <subcellularLocation>
        <location evidence="7">Cell projection</location>
        <location evidence="7">Filopodium membrane</location>
        <topology evidence="7">Peripheral membrane protein</topology>
    </subcellularLocation>
    <subcellularLocation>
        <location evidence="3">Perikaryon</location>
    </subcellularLocation>
    <subcellularLocation>
        <location evidence="3">Cell projection</location>
        <location evidence="3">Dendrite</location>
    </subcellularLocation>
    <subcellularLocation>
        <location evidence="3">Cell projection</location>
        <location evidence="3">Axon</location>
    </subcellularLocation>
    <subcellularLocation>
        <location evidence="3">Cytoplasm</location>
    </subcellularLocation>
    <text evidence="7">Cytoplasmic surface of growth cone and synaptic plasma membranes.</text>
</comment>
<comment type="alternative products">
    <event type="alternative splicing"/>
    <isoform>
        <id>P17677-1</id>
        <name>1</name>
        <sequence type="displayed"/>
    </isoform>
    <isoform>
        <id>P17677-2</id>
        <name>2</name>
        <sequence type="described" ref="VSP_042783"/>
    </isoform>
</comment>
<comment type="PTM">
    <text evidence="3">Phosphorylated (By similarity). Phosphorylation of this protein by a protein kinase C is specifically correlated with certain forms of synaptic plasticity (By similarity).</text>
</comment>
<comment type="PTM">
    <text evidence="2 7 8">Palmitoylated by ZDHHC3 (By similarity). Palmitoylation is regulated by ARF6 and is essential for plasma membrane association and axonal and dendritic filopodia induction (PubMed:14978216). Deacylated by LYPLA2 (PubMed:21152083).</text>
</comment>
<comment type="similarity">
    <text evidence="10">Belongs to the neuromodulin family.</text>
</comment>
<comment type="online information" name="Wikipedia">
    <link uri="https://en.wikipedia.org/wiki/Gap-43_protein"/>
    <text>Gap-43 entry</text>
</comment>
<protein>
    <recommendedName>
        <fullName>Neuromodulin</fullName>
    </recommendedName>
    <alternativeName>
        <fullName>Axonal membrane protein GAP-43</fullName>
    </alternativeName>
    <alternativeName>
        <fullName>Growth-associated protein 43</fullName>
    </alternativeName>
    <alternativeName>
        <fullName>Neural phosphoprotein B-50</fullName>
    </alternativeName>
    <alternativeName>
        <fullName>pp46</fullName>
    </alternativeName>
</protein>
<reference key="1">
    <citation type="journal article" date="1988" name="Neuron">
        <title>Human GAP-43: its deduced amino acid sequence and chromosomal localization in mouse and human.</title>
        <authorList>
            <person name="Kosik K.S."/>
            <person name="Orecchio L.D."/>
            <person name="Bruns G.A.P."/>
            <person name="Benowitz L.I."/>
            <person name="McDonald G.P."/>
            <person name="Cox D.R."/>
            <person name="Neve R."/>
        </authorList>
    </citation>
    <scope>NUCLEOTIDE SEQUENCE [MRNA] (ISOFORM 1)</scope>
</reference>
<reference key="2">
    <citation type="journal article" date="1988" name="Neuron">
        <title>Cloning of human GAP-43: growth association and ischemic resurgence.</title>
        <authorList>
            <person name="Ng S.-C."/>
            <person name="de la Monte S.M."/>
            <person name="Conboy G.L."/>
            <person name="Karns L.R."/>
            <person name="Fishman M.C."/>
        </authorList>
    </citation>
    <scope>NUCLEOTIDE SEQUENCE [MRNA] (ISOFORM 1)</scope>
</reference>
<reference key="3">
    <citation type="journal article" date="1993" name="Brain Res. Mol. Brain Res.">
        <title>Structure of the human gene for the neural phosphoprotein B-50 (GAP-43).</title>
        <authorList>
            <person name="Nielander H.B."/>
            <person name="de Groen P.C."/>
            <person name="Eggen B.J."/>
            <person name="Schrama L.H."/>
            <person name="Gispen W.H."/>
            <person name="Schotman P."/>
        </authorList>
    </citation>
    <scope>NUCLEOTIDE SEQUENCE [GENOMIC DNA]</scope>
</reference>
<reference key="4">
    <citation type="submission" date="2004-11" db="EMBL/GenBank/DDBJ databases">
        <authorList>
            <consortium name="NIEHS SNPs program"/>
        </authorList>
    </citation>
    <scope>NUCLEOTIDE SEQUENCE [GENOMIC DNA]</scope>
</reference>
<reference key="5">
    <citation type="journal article" date="2004" name="Nat. Genet.">
        <title>Complete sequencing and characterization of 21,243 full-length human cDNAs.</title>
        <authorList>
            <person name="Ota T."/>
            <person name="Suzuki Y."/>
            <person name="Nishikawa T."/>
            <person name="Otsuki T."/>
            <person name="Sugiyama T."/>
            <person name="Irie R."/>
            <person name="Wakamatsu A."/>
            <person name="Hayashi K."/>
            <person name="Sato H."/>
            <person name="Nagai K."/>
            <person name="Kimura K."/>
            <person name="Makita H."/>
            <person name="Sekine M."/>
            <person name="Obayashi M."/>
            <person name="Nishi T."/>
            <person name="Shibahara T."/>
            <person name="Tanaka T."/>
            <person name="Ishii S."/>
            <person name="Yamamoto J."/>
            <person name="Saito K."/>
            <person name="Kawai Y."/>
            <person name="Isono Y."/>
            <person name="Nakamura Y."/>
            <person name="Nagahari K."/>
            <person name="Murakami K."/>
            <person name="Yasuda T."/>
            <person name="Iwayanagi T."/>
            <person name="Wagatsuma M."/>
            <person name="Shiratori A."/>
            <person name="Sudo H."/>
            <person name="Hosoiri T."/>
            <person name="Kaku Y."/>
            <person name="Kodaira H."/>
            <person name="Kondo H."/>
            <person name="Sugawara M."/>
            <person name="Takahashi M."/>
            <person name="Kanda K."/>
            <person name="Yokoi T."/>
            <person name="Furuya T."/>
            <person name="Kikkawa E."/>
            <person name="Omura Y."/>
            <person name="Abe K."/>
            <person name="Kamihara K."/>
            <person name="Katsuta N."/>
            <person name="Sato K."/>
            <person name="Tanikawa M."/>
            <person name="Yamazaki M."/>
            <person name="Ninomiya K."/>
            <person name="Ishibashi T."/>
            <person name="Yamashita H."/>
            <person name="Murakawa K."/>
            <person name="Fujimori K."/>
            <person name="Tanai H."/>
            <person name="Kimata M."/>
            <person name="Watanabe M."/>
            <person name="Hiraoka S."/>
            <person name="Chiba Y."/>
            <person name="Ishida S."/>
            <person name="Ono Y."/>
            <person name="Takiguchi S."/>
            <person name="Watanabe S."/>
            <person name="Yosida M."/>
            <person name="Hotuta T."/>
            <person name="Kusano J."/>
            <person name="Kanehori K."/>
            <person name="Takahashi-Fujii A."/>
            <person name="Hara H."/>
            <person name="Tanase T.-O."/>
            <person name="Nomura Y."/>
            <person name="Togiya S."/>
            <person name="Komai F."/>
            <person name="Hara R."/>
            <person name="Takeuchi K."/>
            <person name="Arita M."/>
            <person name="Imose N."/>
            <person name="Musashino K."/>
            <person name="Yuuki H."/>
            <person name="Oshima A."/>
            <person name="Sasaki N."/>
            <person name="Aotsuka S."/>
            <person name="Yoshikawa Y."/>
            <person name="Matsunawa H."/>
            <person name="Ichihara T."/>
            <person name="Shiohata N."/>
            <person name="Sano S."/>
            <person name="Moriya S."/>
            <person name="Momiyama H."/>
            <person name="Satoh N."/>
            <person name="Takami S."/>
            <person name="Terashima Y."/>
            <person name="Suzuki O."/>
            <person name="Nakagawa S."/>
            <person name="Senoh A."/>
            <person name="Mizoguchi H."/>
            <person name="Goto Y."/>
            <person name="Shimizu F."/>
            <person name="Wakebe H."/>
            <person name="Hishigaki H."/>
            <person name="Watanabe T."/>
            <person name="Sugiyama A."/>
            <person name="Takemoto M."/>
            <person name="Kawakami B."/>
            <person name="Yamazaki M."/>
            <person name="Watanabe K."/>
            <person name="Kumagai A."/>
            <person name="Itakura S."/>
            <person name="Fukuzumi Y."/>
            <person name="Fujimori Y."/>
            <person name="Komiyama M."/>
            <person name="Tashiro H."/>
            <person name="Tanigami A."/>
            <person name="Fujiwara T."/>
            <person name="Ono T."/>
            <person name="Yamada K."/>
            <person name="Fujii Y."/>
            <person name="Ozaki K."/>
            <person name="Hirao M."/>
            <person name="Ohmori Y."/>
            <person name="Kawabata A."/>
            <person name="Hikiji T."/>
            <person name="Kobatake N."/>
            <person name="Inagaki H."/>
            <person name="Ikema Y."/>
            <person name="Okamoto S."/>
            <person name="Okitani R."/>
            <person name="Kawakami T."/>
            <person name="Noguchi S."/>
            <person name="Itoh T."/>
            <person name="Shigeta K."/>
            <person name="Senba T."/>
            <person name="Matsumura K."/>
            <person name="Nakajima Y."/>
            <person name="Mizuno T."/>
            <person name="Morinaga M."/>
            <person name="Sasaki M."/>
            <person name="Togashi T."/>
            <person name="Oyama M."/>
            <person name="Hata H."/>
            <person name="Watanabe M."/>
            <person name="Komatsu T."/>
            <person name="Mizushima-Sugano J."/>
            <person name="Satoh T."/>
            <person name="Shirai Y."/>
            <person name="Takahashi Y."/>
            <person name="Nakagawa K."/>
            <person name="Okumura K."/>
            <person name="Nagase T."/>
            <person name="Nomura N."/>
            <person name="Kikuchi H."/>
            <person name="Masuho Y."/>
            <person name="Yamashita R."/>
            <person name="Nakai K."/>
            <person name="Yada T."/>
            <person name="Nakamura Y."/>
            <person name="Ohara O."/>
            <person name="Isogai T."/>
            <person name="Sugano S."/>
        </authorList>
    </citation>
    <scope>NUCLEOTIDE SEQUENCE [LARGE SCALE MRNA] (ISOFORM 2)</scope>
    <source>
        <tissue>Brain cortex</tissue>
        <tissue>Subthalamic nucleus</tissue>
    </source>
</reference>
<reference key="6">
    <citation type="journal article" date="2006" name="Nature">
        <title>The DNA sequence, annotation and analysis of human chromosome 3.</title>
        <authorList>
            <person name="Muzny D.M."/>
            <person name="Scherer S.E."/>
            <person name="Kaul R."/>
            <person name="Wang J."/>
            <person name="Yu J."/>
            <person name="Sudbrak R."/>
            <person name="Buhay C.J."/>
            <person name="Chen R."/>
            <person name="Cree A."/>
            <person name="Ding Y."/>
            <person name="Dugan-Rocha S."/>
            <person name="Gill R."/>
            <person name="Gunaratne P."/>
            <person name="Harris R.A."/>
            <person name="Hawes A.C."/>
            <person name="Hernandez J."/>
            <person name="Hodgson A.V."/>
            <person name="Hume J."/>
            <person name="Jackson A."/>
            <person name="Khan Z.M."/>
            <person name="Kovar-Smith C."/>
            <person name="Lewis L.R."/>
            <person name="Lozado R.J."/>
            <person name="Metzker M.L."/>
            <person name="Milosavljevic A."/>
            <person name="Miner G.R."/>
            <person name="Morgan M.B."/>
            <person name="Nazareth L.V."/>
            <person name="Scott G."/>
            <person name="Sodergren E."/>
            <person name="Song X.-Z."/>
            <person name="Steffen D."/>
            <person name="Wei S."/>
            <person name="Wheeler D.A."/>
            <person name="Wright M.W."/>
            <person name="Worley K.C."/>
            <person name="Yuan Y."/>
            <person name="Zhang Z."/>
            <person name="Adams C.Q."/>
            <person name="Ansari-Lari M.A."/>
            <person name="Ayele M."/>
            <person name="Brown M.J."/>
            <person name="Chen G."/>
            <person name="Chen Z."/>
            <person name="Clendenning J."/>
            <person name="Clerc-Blankenburg K.P."/>
            <person name="Chen R."/>
            <person name="Chen Z."/>
            <person name="Davis C."/>
            <person name="Delgado O."/>
            <person name="Dinh H.H."/>
            <person name="Dong W."/>
            <person name="Draper H."/>
            <person name="Ernst S."/>
            <person name="Fu G."/>
            <person name="Gonzalez-Garay M.L."/>
            <person name="Garcia D.K."/>
            <person name="Gillett W."/>
            <person name="Gu J."/>
            <person name="Hao B."/>
            <person name="Haugen E."/>
            <person name="Havlak P."/>
            <person name="He X."/>
            <person name="Hennig S."/>
            <person name="Hu S."/>
            <person name="Huang W."/>
            <person name="Jackson L.R."/>
            <person name="Jacob L.S."/>
            <person name="Kelly S.H."/>
            <person name="Kube M."/>
            <person name="Levy R."/>
            <person name="Li Z."/>
            <person name="Liu B."/>
            <person name="Liu J."/>
            <person name="Liu W."/>
            <person name="Lu J."/>
            <person name="Maheshwari M."/>
            <person name="Nguyen B.-V."/>
            <person name="Okwuonu G.O."/>
            <person name="Palmeiri A."/>
            <person name="Pasternak S."/>
            <person name="Perez L.M."/>
            <person name="Phelps K.A."/>
            <person name="Plopper F.J."/>
            <person name="Qiang B."/>
            <person name="Raymond C."/>
            <person name="Rodriguez R."/>
            <person name="Saenphimmachak C."/>
            <person name="Santibanez J."/>
            <person name="Shen H."/>
            <person name="Shen Y."/>
            <person name="Subramanian S."/>
            <person name="Tabor P.E."/>
            <person name="Verduzco D."/>
            <person name="Waldron L."/>
            <person name="Wang J."/>
            <person name="Wang J."/>
            <person name="Wang Q."/>
            <person name="Williams G.A."/>
            <person name="Wong G.K.-S."/>
            <person name="Yao Z."/>
            <person name="Zhang J."/>
            <person name="Zhang X."/>
            <person name="Zhao G."/>
            <person name="Zhou J."/>
            <person name="Zhou Y."/>
            <person name="Nelson D."/>
            <person name="Lehrach H."/>
            <person name="Reinhardt R."/>
            <person name="Naylor S.L."/>
            <person name="Yang H."/>
            <person name="Olson M."/>
            <person name="Weinstock G."/>
            <person name="Gibbs R.A."/>
        </authorList>
    </citation>
    <scope>NUCLEOTIDE SEQUENCE [LARGE SCALE GENOMIC DNA]</scope>
</reference>
<reference key="7">
    <citation type="journal article" date="2004" name="Genome Res.">
        <title>The status, quality, and expansion of the NIH full-length cDNA project: the Mammalian Gene Collection (MGC).</title>
        <authorList>
            <consortium name="The MGC Project Team"/>
        </authorList>
    </citation>
    <scope>NUCLEOTIDE SEQUENCE [LARGE SCALE MRNA] (ISOFORM 1)</scope>
    <source>
        <tissue>Brain</tissue>
    </source>
</reference>
<reference key="8">
    <citation type="journal article" date="2004" name="Mol. Biol. Cell">
        <title>Regulation of dendritic branching and filopodia formation in hippocampal neurons by specific acylated protein motifs.</title>
        <authorList>
            <person name="Gauthier-Campbell C."/>
            <person name="Bredt D.S."/>
            <person name="Murphy T.H."/>
            <person name="El-Husseini A."/>
        </authorList>
    </citation>
    <scope>FUNCTION</scope>
    <scope>SUBCELLULAR LOCATION</scope>
    <scope>PALMITOYLATION</scope>
    <scope>MUTAGENESIS OF 3-CYS-CYS-4</scope>
</reference>
<reference key="9">
    <citation type="journal article" date="2010" name="PLoS ONE">
        <title>Acyl-protein thioesterase 2 catalyzes the deacylation of peripheral membrane-associated GAP-43.</title>
        <authorList>
            <person name="Tomatis V.M."/>
            <person name="Trenchi A."/>
            <person name="Gomez G.A."/>
            <person name="Daniotti J.L."/>
        </authorList>
    </citation>
    <scope>DEACYLATION BY LYPLA2</scope>
</reference>
<reference key="10">
    <citation type="journal article" date="2011" name="Sci. Signal.">
        <title>System-wide temporal characterization of the proteome and phosphoproteome of human embryonic stem cell differentiation.</title>
        <authorList>
            <person name="Rigbolt K.T."/>
            <person name="Prokhorova T.A."/>
            <person name="Akimov V."/>
            <person name="Henningsen J."/>
            <person name="Johansen P.T."/>
            <person name="Kratchmarova I."/>
            <person name="Kassem M."/>
            <person name="Mann M."/>
            <person name="Olsen J.V."/>
            <person name="Blagoev B."/>
        </authorList>
    </citation>
    <scope>IDENTIFICATION BY MASS SPECTROMETRY [LARGE SCALE ANALYSIS]</scope>
</reference>
<reference key="11">
    <citation type="journal article" date="1999" name="Nat. Genet.">
        <title>Characterization of single-nucleotide polymorphisms in coding regions of human genes.</title>
        <authorList>
            <person name="Cargill M."/>
            <person name="Altshuler D."/>
            <person name="Ireland J."/>
            <person name="Sklar P."/>
            <person name="Ardlie K."/>
            <person name="Patil N."/>
            <person name="Shaw N."/>
            <person name="Lane C.R."/>
            <person name="Lim E.P."/>
            <person name="Kalyanaraman N."/>
            <person name="Nemesh J."/>
            <person name="Ziaugra L."/>
            <person name="Friedland L."/>
            <person name="Rolfe A."/>
            <person name="Warrington J."/>
            <person name="Lipshutz R."/>
            <person name="Daley G.Q."/>
            <person name="Lander E.S."/>
        </authorList>
    </citation>
    <scope>VARIANT ILE-59</scope>
</reference>
<reference key="12">
    <citation type="journal article" date="1999" name="Nat. Genet.">
        <authorList>
            <person name="Cargill M."/>
            <person name="Altshuler D."/>
            <person name="Ireland J."/>
            <person name="Sklar P."/>
            <person name="Ardlie K."/>
            <person name="Patil N."/>
            <person name="Shaw N."/>
            <person name="Lane C.R."/>
            <person name="Lim E.P."/>
            <person name="Kalyanaraman N."/>
            <person name="Nemesh J."/>
            <person name="Ziaugra L."/>
            <person name="Friedland L."/>
            <person name="Rolfe A."/>
            <person name="Warrington J."/>
            <person name="Lipshutz R."/>
            <person name="Daley G.Q."/>
            <person name="Lander E.S."/>
        </authorList>
    </citation>
    <scope>ERRATUM OF PUBMED:10391209</scope>
</reference>
<proteinExistence type="evidence at protein level"/>
<name>NEUM_HUMAN</name>
<accession>P17677</accession>
<accession>A8K0Y4</accession>
<sequence length="238" mass="24803">MLCCMRRTKQVEKNDDDQKIEQDGIKPEDKAHKAATKIQASFRGHITRKKLKGEKKDDVQAAEAEANKKDEAPVADGVEKKGEGTTTAEAAPATGSKPDEPGKAGETPSEEKKGEGDAATEQAAPQAPASSEEKAGSAETESATKASTDNSPSSKAEDAPAKEEPKQADVPAAVTAAAATTPAAEDAAAKATAQPPTETGESSQAEENIEAVDETKPKESARQDEGKEEEPEADQEHA</sequence>